<accession>Q3ECS5</accession>
<reference key="1">
    <citation type="journal article" date="2000" name="Nature">
        <title>Sequence and analysis of chromosome 1 of the plant Arabidopsis thaliana.</title>
        <authorList>
            <person name="Theologis A."/>
            <person name="Ecker J.R."/>
            <person name="Palm C.J."/>
            <person name="Federspiel N.A."/>
            <person name="Kaul S."/>
            <person name="White O."/>
            <person name="Alonso J."/>
            <person name="Altafi H."/>
            <person name="Araujo R."/>
            <person name="Bowman C.L."/>
            <person name="Brooks S.Y."/>
            <person name="Buehler E."/>
            <person name="Chan A."/>
            <person name="Chao Q."/>
            <person name="Chen H."/>
            <person name="Cheuk R.F."/>
            <person name="Chin C.W."/>
            <person name="Chung M.K."/>
            <person name="Conn L."/>
            <person name="Conway A.B."/>
            <person name="Conway A.R."/>
            <person name="Creasy T.H."/>
            <person name="Dewar K."/>
            <person name="Dunn P."/>
            <person name="Etgu P."/>
            <person name="Feldblyum T.V."/>
            <person name="Feng J.-D."/>
            <person name="Fong B."/>
            <person name="Fujii C.Y."/>
            <person name="Gill J.E."/>
            <person name="Goldsmith A.D."/>
            <person name="Haas B."/>
            <person name="Hansen N.F."/>
            <person name="Hughes B."/>
            <person name="Huizar L."/>
            <person name="Hunter J.L."/>
            <person name="Jenkins J."/>
            <person name="Johnson-Hopson C."/>
            <person name="Khan S."/>
            <person name="Khaykin E."/>
            <person name="Kim C.J."/>
            <person name="Koo H.L."/>
            <person name="Kremenetskaia I."/>
            <person name="Kurtz D.B."/>
            <person name="Kwan A."/>
            <person name="Lam B."/>
            <person name="Langin-Hooper S."/>
            <person name="Lee A."/>
            <person name="Lee J.M."/>
            <person name="Lenz C.A."/>
            <person name="Li J.H."/>
            <person name="Li Y.-P."/>
            <person name="Lin X."/>
            <person name="Liu S.X."/>
            <person name="Liu Z.A."/>
            <person name="Luros J.S."/>
            <person name="Maiti R."/>
            <person name="Marziali A."/>
            <person name="Militscher J."/>
            <person name="Miranda M."/>
            <person name="Nguyen M."/>
            <person name="Nierman W.C."/>
            <person name="Osborne B.I."/>
            <person name="Pai G."/>
            <person name="Peterson J."/>
            <person name="Pham P.K."/>
            <person name="Rizzo M."/>
            <person name="Rooney T."/>
            <person name="Rowley D."/>
            <person name="Sakano H."/>
            <person name="Salzberg S.L."/>
            <person name="Schwartz J.R."/>
            <person name="Shinn P."/>
            <person name="Southwick A.M."/>
            <person name="Sun H."/>
            <person name="Tallon L.J."/>
            <person name="Tambunga G."/>
            <person name="Toriumi M.J."/>
            <person name="Town C.D."/>
            <person name="Utterback T."/>
            <person name="Van Aken S."/>
            <person name="Vaysberg M."/>
            <person name="Vysotskaia V.S."/>
            <person name="Walker M."/>
            <person name="Wu D."/>
            <person name="Yu G."/>
            <person name="Fraser C.M."/>
            <person name="Venter J.C."/>
            <person name="Davis R.W."/>
        </authorList>
    </citation>
    <scope>NUCLEOTIDE SEQUENCE [LARGE SCALE GENOMIC DNA]</scope>
    <source>
        <strain>cv. Columbia</strain>
    </source>
</reference>
<reference key="2">
    <citation type="journal article" date="2017" name="Plant J.">
        <title>Araport11: a complete reannotation of the Arabidopsis thaliana reference genome.</title>
        <authorList>
            <person name="Cheng C.Y."/>
            <person name="Krishnakumar V."/>
            <person name="Chan A.P."/>
            <person name="Thibaud-Nissen F."/>
            <person name="Schobel S."/>
            <person name="Town C.D."/>
        </authorList>
    </citation>
    <scope>GENOME REANNOTATION</scope>
    <source>
        <strain>cv. Columbia</strain>
    </source>
</reference>
<reference key="3">
    <citation type="submission" date="2006-03" db="EMBL/GenBank/DDBJ databases">
        <title>Arabidopsis ORF clones.</title>
        <authorList>
            <person name="Kim C.J."/>
            <person name="Chen H."/>
            <person name="Shinn P."/>
            <person name="Ecker J.R."/>
        </authorList>
    </citation>
    <scope>NUCLEOTIDE SEQUENCE [LARGE SCALE MRNA]</scope>
    <source>
        <strain>cv. Columbia</strain>
    </source>
</reference>
<reference key="4">
    <citation type="journal article" date="2014" name="Plant Cell">
        <title>The Arabidopsis SIAMESE-RELATED cyclin-dependent kinase inhibitors SMR5 and SMR7 regulate the DNA damage checkpoint in response to reactive oxygen species.</title>
        <authorList>
            <person name="Yi D."/>
            <person name="Alvim Kamei C.L."/>
            <person name="Cools T."/>
            <person name="Vanderauwera S."/>
            <person name="Takahashi N."/>
            <person name="Okushima Y."/>
            <person name="Eekhout T."/>
            <person name="Yoshiyama K.O."/>
            <person name="Larkin J."/>
            <person name="Van den Daele H."/>
            <person name="Conklin P."/>
            <person name="Britt A."/>
            <person name="Umeda M."/>
            <person name="De Veylder L."/>
        </authorList>
    </citation>
    <scope>GENE FAMILY</scope>
    <scope>NOMENCLATURE</scope>
</reference>
<reference key="5">
    <citation type="journal article" date="2015" name="Plant Cell">
        <title>Functional conservation in the SIAMESE-RELATED family of cyclin-dependent kinase inhibitors in land plants.</title>
        <authorList>
            <person name="Kumar N."/>
            <person name="Harashima H."/>
            <person name="Kalve S."/>
            <person name="Bramsiepe J."/>
            <person name="Wang K."/>
            <person name="Sizani B.L."/>
            <person name="Bertrand L.L."/>
            <person name="Johnson M.C."/>
            <person name="Faulk C."/>
            <person name="Dale R."/>
            <person name="Simmons L.A."/>
            <person name="Churchman M.L."/>
            <person name="Sugimoto K."/>
            <person name="Kato N."/>
            <person name="Dasanayake M."/>
            <person name="Beemster G."/>
            <person name="Schnittger A."/>
            <person name="Larkin J.C."/>
        </authorList>
    </citation>
    <scope>GENE FAMILY</scope>
    <scope>NOMENCLATURE</scope>
</reference>
<comment type="function">
    <text evidence="1">Probable cyclin-dependent protein kinase (CDK) inhibitor that functions as a repressor of mitosis in the endoreduplication cell cycle.</text>
</comment>
<proteinExistence type="inferred from homology"/>
<evidence type="ECO:0000250" key="1">
    <source>
        <dbReference type="UniProtKB" id="Q9LZ78"/>
    </source>
</evidence>
<evidence type="ECO:0000256" key="2">
    <source>
        <dbReference type="SAM" id="MobiDB-lite"/>
    </source>
</evidence>
<evidence type="ECO:0000303" key="3">
    <source>
    </source>
</evidence>
<evidence type="ECO:0000303" key="4">
    <source>
    </source>
</evidence>
<evidence type="ECO:0000312" key="5">
    <source>
        <dbReference type="Araport" id="AT1G51355"/>
    </source>
</evidence>
<evidence type="ECO:0000312" key="6">
    <source>
        <dbReference type="EMBL" id="AC006085"/>
    </source>
</evidence>
<evidence type="ECO:0000312" key="7">
    <source>
        <dbReference type="Proteomes" id="UP000006548"/>
    </source>
</evidence>
<dbReference type="EMBL" id="AC006085">
    <property type="status" value="NOT_ANNOTATED_CDS"/>
    <property type="molecule type" value="Genomic_DNA"/>
</dbReference>
<dbReference type="EMBL" id="CP002684">
    <property type="protein sequence ID" value="AEE32655.1"/>
    <property type="molecule type" value="Genomic_DNA"/>
</dbReference>
<dbReference type="EMBL" id="BT024784">
    <property type="protein sequence ID" value="ABD59122.1"/>
    <property type="molecule type" value="mRNA"/>
</dbReference>
<dbReference type="RefSeq" id="NP_683417.1">
    <property type="nucleotide sequence ID" value="NM_148576.3"/>
</dbReference>
<dbReference type="IntAct" id="Q3ECS5">
    <property type="interactions" value="4"/>
</dbReference>
<dbReference type="GlyGen" id="Q3ECS5">
    <property type="glycosylation" value="1 site"/>
</dbReference>
<dbReference type="PaxDb" id="3702-AT1G51355.1"/>
<dbReference type="EnsemblPlants" id="AT1G51355.1">
    <property type="protein sequence ID" value="AT1G51355.1"/>
    <property type="gene ID" value="AT1G51355"/>
</dbReference>
<dbReference type="GeneID" id="841559"/>
<dbReference type="Gramene" id="AT1G51355.1">
    <property type="protein sequence ID" value="AT1G51355.1"/>
    <property type="gene ID" value="AT1G51355"/>
</dbReference>
<dbReference type="KEGG" id="ath:AT1G51355"/>
<dbReference type="Araport" id="AT1G51355"/>
<dbReference type="TAIR" id="AT1G51355">
    <property type="gene designation" value="SMR9"/>
</dbReference>
<dbReference type="eggNOG" id="ENOG502S7SX">
    <property type="taxonomic scope" value="Eukaryota"/>
</dbReference>
<dbReference type="HOGENOM" id="CLU_128426_1_0_1"/>
<dbReference type="InParanoid" id="Q3ECS5"/>
<dbReference type="OMA" id="SITSHCY"/>
<dbReference type="PRO" id="PR:Q3ECS5"/>
<dbReference type="Proteomes" id="UP000006548">
    <property type="component" value="Chromosome 1"/>
</dbReference>
<dbReference type="ExpressionAtlas" id="Q3ECS5">
    <property type="expression patterns" value="baseline and differential"/>
</dbReference>
<dbReference type="GO" id="GO:0004860">
    <property type="term" value="F:protein kinase inhibitor activity"/>
    <property type="evidence" value="ECO:0007669"/>
    <property type="project" value="UniProtKB-KW"/>
</dbReference>
<dbReference type="GO" id="GO:0032875">
    <property type="term" value="P:regulation of DNA endoreduplication"/>
    <property type="evidence" value="ECO:0007669"/>
    <property type="project" value="InterPro"/>
</dbReference>
<dbReference type="InterPro" id="IPR040389">
    <property type="entry name" value="SMR"/>
</dbReference>
<dbReference type="PANTHER" id="PTHR33142">
    <property type="entry name" value="CYCLIN-DEPENDENT PROTEIN KINASE INHIBITOR SMR13"/>
    <property type="match status" value="1"/>
</dbReference>
<dbReference type="PANTHER" id="PTHR33142:SF8">
    <property type="entry name" value="CYCLIN-DEPENDENT PROTEIN KINASE INHIBITOR SMR9"/>
    <property type="match status" value="1"/>
</dbReference>
<name>SMR9_ARATH</name>
<feature type="chain" id="PRO_0000438468" description="Cyclin-dependent protein kinase inhibitor SMR9">
    <location>
        <begin position="1"/>
        <end position="116"/>
    </location>
</feature>
<feature type="region of interest" description="Disordered" evidence="2">
    <location>
        <begin position="1"/>
        <end position="62"/>
    </location>
</feature>
<feature type="compositionally biased region" description="Basic residues" evidence="2">
    <location>
        <begin position="1"/>
        <end position="22"/>
    </location>
</feature>
<feature type="compositionally biased region" description="Low complexity" evidence="2">
    <location>
        <begin position="35"/>
        <end position="56"/>
    </location>
</feature>
<sequence length="116" mass="12709">MASKGKKPLRRTTTRRRKRSHFKNPSPPCSINSDVTSTSSTSTSPTSTATPSPVSAESGCCTPEKSRIPEMLTCPPAPKKQKVAQNCALRRRQIAFFAPPDVELFFVFALGQQNNK</sequence>
<keyword id="KW-0131">Cell cycle</keyword>
<keyword id="KW-0649">Protein kinase inhibitor</keyword>
<keyword id="KW-1185">Reference proteome</keyword>
<organism evidence="7">
    <name type="scientific">Arabidopsis thaliana</name>
    <name type="common">Mouse-ear cress</name>
    <dbReference type="NCBI Taxonomy" id="3702"/>
    <lineage>
        <taxon>Eukaryota</taxon>
        <taxon>Viridiplantae</taxon>
        <taxon>Streptophyta</taxon>
        <taxon>Embryophyta</taxon>
        <taxon>Tracheophyta</taxon>
        <taxon>Spermatophyta</taxon>
        <taxon>Magnoliopsida</taxon>
        <taxon>eudicotyledons</taxon>
        <taxon>Gunneridae</taxon>
        <taxon>Pentapetalae</taxon>
        <taxon>rosids</taxon>
        <taxon>malvids</taxon>
        <taxon>Brassicales</taxon>
        <taxon>Brassicaceae</taxon>
        <taxon>Camelineae</taxon>
        <taxon>Arabidopsis</taxon>
    </lineage>
</organism>
<gene>
    <name evidence="3 4" type="primary">SMR9</name>
    <name evidence="5" type="ordered locus">At1g51355</name>
    <name evidence="6" type="ORF">F11M15</name>
</gene>
<protein>
    <recommendedName>
        <fullName evidence="3 4">Cyclin-dependent protein kinase inhibitor SMR9</fullName>
    </recommendedName>
    <alternativeName>
        <fullName evidence="3 4">Protein SIAMESE-RELATED 9</fullName>
    </alternativeName>
</protein>